<evidence type="ECO:0000250" key="1">
    <source>
        <dbReference type="UniProtKB" id="P13202"/>
    </source>
</evidence>
<evidence type="ECO:0000256" key="2">
    <source>
        <dbReference type="SAM" id="MobiDB-lite"/>
    </source>
</evidence>
<evidence type="ECO:0000269" key="3">
    <source>
    </source>
</evidence>
<evidence type="ECO:0000269" key="4">
    <source>
    </source>
</evidence>
<evidence type="ECO:0000269" key="5">
    <source>
    </source>
</evidence>
<evidence type="ECO:0000269" key="6">
    <source>
    </source>
</evidence>
<evidence type="ECO:0000269" key="7">
    <source>
    </source>
</evidence>
<evidence type="ECO:0000269" key="8">
    <source>
    </source>
</evidence>
<evidence type="ECO:0000269" key="9">
    <source>
    </source>
</evidence>
<evidence type="ECO:0000269" key="10">
    <source>
    </source>
</evidence>
<evidence type="ECO:0000269" key="11">
    <source>
    </source>
</evidence>
<evidence type="ECO:0000269" key="12">
    <source>
    </source>
</evidence>
<evidence type="ECO:0000269" key="13">
    <source>
    </source>
</evidence>
<evidence type="ECO:0000269" key="14">
    <source>
    </source>
</evidence>
<evidence type="ECO:0000269" key="15">
    <source>
    </source>
</evidence>
<evidence type="ECO:0000269" key="16">
    <source>
    </source>
</evidence>
<evidence type="ECO:0000269" key="17">
    <source>
    </source>
</evidence>
<evidence type="ECO:0000269" key="18">
    <source>
    </source>
</evidence>
<evidence type="ECO:0000269" key="19">
    <source>
    </source>
</evidence>
<evidence type="ECO:0000269" key="20">
    <source>
    </source>
</evidence>
<evidence type="ECO:0000269" key="21">
    <source>
    </source>
</evidence>
<evidence type="ECO:0000269" key="22">
    <source>
    </source>
</evidence>
<evidence type="ECO:0000269" key="23">
    <source>
    </source>
</evidence>
<evidence type="ECO:0000269" key="24">
    <source>
    </source>
</evidence>
<evidence type="ECO:0000269" key="25">
    <source>
    </source>
</evidence>
<evidence type="ECO:0000269" key="26">
    <source>
    </source>
</evidence>
<evidence type="ECO:0000269" key="27">
    <source>
    </source>
</evidence>
<evidence type="ECO:0000269" key="28">
    <source>
    </source>
</evidence>
<evidence type="ECO:0000303" key="29">
    <source>
    </source>
</evidence>
<evidence type="ECO:0000305" key="30"/>
<evidence type="ECO:0000305" key="31">
    <source>
    </source>
</evidence>
<evidence type="ECO:0007744" key="32">
    <source>
        <dbReference type="PDB" id="5E5A"/>
    </source>
</evidence>
<evidence type="ECO:0007829" key="33">
    <source>
        <dbReference type="PDB" id="5E5A"/>
    </source>
</evidence>
<gene>
    <name type="primary">UL123</name>
</gene>
<reference key="1">
    <citation type="journal article" date="1984" name="J. Virol.">
        <title>Structural analysis of the major immediate early gene of human cytomegalovirus.</title>
        <authorList>
            <person name="Stenberg R.M."/>
            <person name="Thomsen D.R."/>
            <person name="Stinski M.F."/>
        </authorList>
    </citation>
    <scope>NUCLEOTIDE SEQUENCE [GENOMIC DNA]</scope>
</reference>
<reference key="2">
    <citation type="journal article" date="1991" name="Nucleic Acids Res.">
        <title>Effect of intron A from human cytomegalovirus (Towne) immediate early gene on heterologous expression in mammalian cells.</title>
        <authorList>
            <person name="Chapman B.S."/>
            <person name="Thayer R.M."/>
            <person name="Vincent K.A."/>
            <person name="Haigwood N.L."/>
        </authorList>
    </citation>
    <scope>NUCLEOTIDE SEQUENCE [GENOMIC DNA] OF 1-48</scope>
</reference>
<reference key="3">
    <citation type="journal article" date="1995" name="J. Virol.">
        <title>Interaction of the 72-kilodalton human cytomegalovirus IE1 gene product with E2F1 coincides with E2F-dependent activation of dihydrofolate reductase transcription.</title>
        <authorList>
            <person name="Margolis M.J."/>
            <person name="Pajovic S."/>
            <person name="Wong E.L."/>
            <person name="Wade M."/>
            <person name="Jupp R."/>
            <person name="Nelson J.A."/>
            <person name="Azizkhan J.C."/>
        </authorList>
    </citation>
    <scope>INTERACTION WITH HOST E2F1</scope>
</reference>
<reference key="4">
    <citation type="journal article" date="1996" name="Proc. Natl. Acad. Sci. U.S.A.">
        <title>A deletion mutant in the human cytomegalovirus gene encoding IE1(491aa) is replication defective due to a failure in autoregulation.</title>
        <authorList>
            <person name="Mocarski E.S."/>
            <person name="Kemble G.W."/>
            <person name="Lyle J.M."/>
            <person name="Greaves R.F."/>
        </authorList>
    </citation>
    <scope>FUNCTION</scope>
</reference>
<reference key="5">
    <citation type="journal article" date="1996" name="J. Virol.">
        <title>The human cytomegalovirus IE1-72 protein interacts with the cellular p107 protein and relieves p107-mediated transcriptional repression of an E2F-responsive promoter.</title>
        <authorList>
            <person name="Poma E.E."/>
            <person name="Kowalik T.F."/>
            <person name="Zhu L."/>
            <person name="Sinclair J.H."/>
            <person name="Huang E.S."/>
        </authorList>
    </citation>
    <scope>INTERACTION WITH HUMAN RB1</scope>
    <scope>FUNCTION</scope>
</reference>
<reference key="6">
    <citation type="journal article" date="1997" name="J. Virol.">
        <title>The major immediate-early proteins IE1 and IE2 of human cytomegalovirus colocalize with and disrupt PML-associated nuclear bodies at very early times in infected permissive cells.</title>
        <authorList>
            <person name="Ahn J.H."/>
            <person name="Hayward G.S."/>
        </authorList>
    </citation>
    <scope>SUBCELLULAR LOCATION</scope>
    <scope>FUNCTION</scope>
</reference>
<reference key="7">
    <citation type="journal article" date="1999" name="J. Virol.">
        <title>Viral immediate-early proteins abrogate the modification by SUMO-1 of PML and Sp100 proteins, correlating with nuclear body disruption.</title>
        <authorList>
            <person name="Mueller S."/>
            <person name="Dejean A."/>
        </authorList>
    </citation>
    <scope>FUNCTION</scope>
</reference>
<reference key="8">
    <citation type="journal article" date="2002" name="J. Virol.">
        <title>SUMO-1 modification of human cytomegalovirus IE1/IE72.</title>
        <authorList>
            <person name="Spengler M.L."/>
            <person name="Kurapatwinski K."/>
            <person name="Black A.R."/>
            <person name="Azizkhan-Clifford J."/>
        </authorList>
    </citation>
    <scope>SUMOYLATION AT LYS-450</scope>
    <scope>MUTAGENESIS OF LYS-450</scope>
</reference>
<reference key="9">
    <citation type="journal article" date="2004" name="J. Virol.">
        <title>Ability of the human cytomegalovirus IE1 protein to modulate sumoylation of PML correlates with its functional activities in transcriptional regulation and infectivity in cultured fibroblast cells.</title>
        <authorList>
            <person name="Lee H.R."/>
            <person name="Kim D.J."/>
            <person name="Lee J.M."/>
            <person name="Choi C.Y."/>
            <person name="Ahn B.Y."/>
            <person name="Hayward G.S."/>
            <person name="Ahn J.H."/>
        </authorList>
    </citation>
    <scope>FUNCTION</scope>
    <scope>DOMAIN</scope>
    <scope>MUTAGENESIS OF LEU-174</scope>
    <scope>INTERACTION WITH HOST PML</scope>
</reference>
<reference key="10">
    <citation type="journal article" date="2004" name="J. Virol.">
        <title>SUMOylation of the human cytomegalovirus 72-kilodalton IE1 protein facilitates expression of the 86-kilodalton IE2 protein and promotes viral replication.</title>
        <authorList>
            <person name="Nevels M."/>
            <person name="Brune W."/>
            <person name="Shenk T."/>
        </authorList>
    </citation>
    <scope>MUTAGENESIS OF LYS-450</scope>
    <scope>SUBCELLULAR LOCATION</scope>
</reference>
<reference key="11">
    <citation type="journal article" date="2004" name="Proc. Natl. Acad. Sci. U.S.A.">
        <title>Human cytomegalovirus immediate-early 1 protein facilitates viral replication by antagonizing histone deacetylation.</title>
        <authorList>
            <person name="Nevels M."/>
            <person name="Paulus C."/>
            <person name="Shenk T."/>
        </authorList>
    </citation>
    <scope>FUNCTION</scope>
    <scope>INTERACTION WITH HOST HDAC3</scope>
    <source>
        <strain>CR208</strain>
        <strain>Towne</strain>
    </source>
</reference>
<reference key="12">
    <citation type="journal article" date="2006" name="Proc. Natl. Acad. Sci. U.S.A.">
        <title>A human cytomegalovirus antagonist of type I IFN-dependent signal transducer and activator of transcription signaling.</title>
        <authorList>
            <person name="Paulus C."/>
            <person name="Krauss S."/>
            <person name="Nevels M."/>
        </authorList>
    </citation>
    <scope>FUNCTION</scope>
    <scope>INTERACTION WITH HOST STAT1</scope>
    <scope>INTERACTION WITH HOST STAT2</scope>
    <scope>SUBCELLULAR LOCATION</scope>
    <source>
        <strain>CR208</strain>
        <strain>Towne</strain>
    </source>
</reference>
<reference key="13">
    <citation type="journal article" date="2007" name="Biochem. Biophys. Res. Commun.">
        <title>N-terminal determinants of human cytomegalovirus IE1 protein in nuclear targeting and disrupting PML-associated subnuclear structures.</title>
        <authorList>
            <person name="Lee H.R."/>
            <person name="Huh Y.H."/>
            <person name="Kim Y.E."/>
            <person name="Lee K."/>
            <person name="Kim S."/>
            <person name="Ahn J.H."/>
        </authorList>
    </citation>
    <scope>NUCLEAR LOCALIZATION SIGNAL</scope>
    <scope>DOMAIN</scope>
    <scope>FUNCTION</scope>
</reference>
<reference key="14">
    <citation type="journal article" date="2007" name="Virology">
        <title>Ectopic expression of HCMV IE72 and IE86 proteins is sufficient to induce early gene expression but not production of infectious virus in undifferentiated promonocytic THP-1 cells.</title>
        <authorList>
            <person name="Yee L.F."/>
            <person name="Lin P.L."/>
            <person name="Stinski M.F."/>
        </authorList>
    </citation>
    <scope>FUNCTION</scope>
</reference>
<reference key="15">
    <citation type="journal article" date="2008" name="J. Virol.">
        <title>Binding STAT2 by the acidic domain of human cytomegalovirus IE1 promotes viral growth and is negatively regulated by SUMO.</title>
        <authorList>
            <person name="Huh Y.H."/>
            <person name="Kim Y.E."/>
            <person name="Kim E.T."/>
            <person name="Park J.J."/>
            <person name="Song M.J."/>
            <person name="Zhu H."/>
            <person name="Hayward G.S."/>
            <person name="Ahn J.H."/>
        </authorList>
    </citation>
    <scope>INTERACTION WITH HOST STAT2</scope>
    <scope>SUMOYLATION AT LYS-450</scope>
    <scope>FUNCTION</scope>
</reference>
<reference key="16">
    <citation type="journal article" date="2009" name="J. Virol.">
        <title>Physical requirements and functional consequences of complex formation between the cytomegalovirus IE1 protein and human STAT2.</title>
        <authorList>
            <person name="Krauss S."/>
            <person name="Kaps J."/>
            <person name="Czech N."/>
            <person name="Paulus C."/>
            <person name="Nevels M."/>
        </authorList>
    </citation>
    <scope>INTERACTION WITH HOST STAT2</scope>
    <scope>FUNCTION</scope>
</reference>
<reference key="17">
    <citation type="journal article" date="2009" name="J. Virol.">
        <title>Human cytomegalovirus IE1-72 protein interacts with p53 and inhibits p53-dependent transactivation by a mechanism different from that of IE2-86 protein.</title>
        <authorList>
            <person name="Hwang E.S."/>
            <person name="Zhang Z."/>
            <person name="Cai H."/>
            <person name="Huang D.Y."/>
            <person name="Huong S.M."/>
            <person name="Cha C.Y."/>
            <person name="Huang E.S."/>
        </authorList>
    </citation>
    <scope>INTERACTION WITH HUMAN TP53</scope>
</reference>
<reference key="18">
    <citation type="journal article" date="2010" name="J. Virol.">
        <title>Human cytomegalovirus IE72 protein interacts with the transcriptional repressor hDaxx to regulate LUNA gene expression during lytic infection.</title>
        <authorList>
            <person name="Reeves M."/>
            <person name="Woodhall D."/>
            <person name="Compton T."/>
            <person name="Sinclair J."/>
        </authorList>
    </citation>
    <scope>INTERACTION WITH HUMAN DAXX</scope>
</reference>
<reference key="19">
    <citation type="journal article" date="2011" name="J. Virol.">
        <title>Human cytomegalovirus infection causes degradation of Sp100 proteins that suppress viral gene expression.</title>
        <authorList>
            <person name="Kim Y.E."/>
            <person name="Lee J.H."/>
            <person name="Kim E.T."/>
            <person name="Shin H.J."/>
            <person name="Gu S.Y."/>
            <person name="Seol H.S."/>
            <person name="Ling P.D."/>
            <person name="Lee C.H."/>
            <person name="Ahn J.H."/>
        </authorList>
    </citation>
    <scope>INTERACTION WITH HUMAN SP100</scope>
    <scope>FUNCTION</scope>
</reference>
<reference key="20">
    <citation type="journal article" date="2012" name="J. Gen. Virol.">
        <title>The chromatin-tethering domain of human cytomegalovirus IE1 mediates associations of IE1, PML, and STAT2 with mitotic chromosomes, but is not essential for viral replication.</title>
        <authorList>
            <person name="Shin H.J."/>
            <person name="Kim Y.E."/>
            <person name="Kim E.T."/>
            <person name="Ahn J.H."/>
        </authorList>
    </citation>
    <scope>DOMAIN</scope>
</reference>
<reference key="21">
    <citation type="journal article" date="2013" name="Proc. Natl. Acad. Sci. U.S.A.">
        <title>Nucleosome maps of the human cytomegalovirus genome reveal a temporal switch in chromatin organization linked to a major IE protein.</title>
        <authorList>
            <person name="Zalckvar E."/>
            <person name="Paulus C."/>
            <person name="Tillo D."/>
            <person name="Asbach-Nitzsche A."/>
            <person name="Lubling Y."/>
            <person name="Winterling C."/>
            <person name="Strieder N."/>
            <person name="Muecke K."/>
            <person name="Goodrum F."/>
            <person name="Segal E."/>
            <person name="Nevels M."/>
        </authorList>
    </citation>
    <scope>FUNCTION</scope>
    <source>
        <strain>TB40/E</strain>
    </source>
</reference>
<reference key="22">
    <citation type="journal article" date="2014" name="J. Virol.">
        <title>Human cytomegalovirus major immediate early 1 protein targets host chromosomes by docking to the acidic pocket on the nucleosome surface.</title>
        <authorList>
            <person name="Muecke K."/>
            <person name="Paulus C."/>
            <person name="Bernhardt K."/>
            <person name="Gerrer K."/>
            <person name="Schoen K."/>
            <person name="Fink A."/>
            <person name="Sauer E.M."/>
            <person name="Asbach-Nitzsche A."/>
            <person name="Harwardt T."/>
            <person name="Kieninger B."/>
            <person name="Kremer W."/>
            <person name="Kalbitzer H.R."/>
            <person name="Nevels M."/>
        </authorList>
    </citation>
    <scope>DOMAIN</scope>
</reference>
<reference key="23">
    <citation type="journal article" date="2015" name="PLoS Pathog.">
        <title>Positive role of promyelocytic leukemia protein in type I interferon response and its regulation by human cytomegalovirus.</title>
        <authorList>
            <person name="Kim Y.E."/>
            <person name="Ahn J.H."/>
        </authorList>
    </citation>
    <scope>FUNCTION</scope>
    <scope>INTERACTION WITH HOST STAT1</scope>
    <scope>INTERACTION WITH HOST STAT2</scope>
    <scope>INTERACTION WITH HOST HDAC1</scope>
    <scope>INTERACTION WITH HOST HDAC2</scope>
    <scope>INTERACTION WITH HOST PML</scope>
    <source>
        <strain>Toledo</strain>
    </source>
</reference>
<reference key="24">
    <citation type="journal article" date="2016" name="PLoS Pathog.">
        <title>Human Cytomegalovirus Immediate-Early 1 Protein Rewires Upstream STAT3 to Downstream STAT1 Signaling Switching an IL6-Type to an IFNgamma-Like Response.</title>
        <authorList>
            <person name="Harwardt T."/>
            <person name="Lukas S."/>
            <person name="Zenger M."/>
            <person name="Reitberger T."/>
            <person name="Danzer D."/>
            <person name="Uebner T."/>
            <person name="Munday D.C."/>
            <person name="Nevels M."/>
            <person name="Paulus C."/>
        </authorList>
    </citation>
    <scope>FUNCTION</scope>
    <scope>INTERACTION WITH HOST STAT3</scope>
    <source>
        <strain>TB40/E</strain>
    </source>
</reference>
<reference key="25">
    <citation type="journal article" date="2017" name="PLoS Pathog.">
        <title>Human cytomegalovirus IE1 downregulates Hes1 in neural progenitor cells as a potential E3 ubiquitin ligase.</title>
        <authorList>
            <person name="Liu X.J."/>
            <person name="Yang B."/>
            <person name="Huang S.N."/>
            <person name="Wu C.C."/>
            <person name="Li X.J."/>
            <person name="Cheng S."/>
            <person name="Jiang X."/>
            <person name="Hu F."/>
            <person name="Ming Y.Z."/>
            <person name="Nevels M."/>
            <person name="Britt W.J."/>
            <person name="Rayner S."/>
            <person name="Tang Q."/>
            <person name="Zeng W.B."/>
            <person name="Zhao F."/>
            <person name="Luo M.H."/>
        </authorList>
    </citation>
    <scope>FUNCTION</scope>
    <scope>SUBCELLULAR LOCATION</scope>
</reference>
<reference key="26">
    <citation type="journal article" date="2022" name="Microbiol. Spectr.">
        <title>The Interferon-Inducible Human PLSCR1 Protein Is a Restriction Factor of Human Cytomegalovirus.</title>
        <authorList>
            <person name="Sadanari H."/>
            <person name="Takemoto M."/>
            <person name="Ishida T."/>
            <person name="Otagiri H."/>
            <person name="Daikoku T."/>
            <person name="Murayama T."/>
            <person name="Kusano S."/>
        </authorList>
    </citation>
    <scope>FUNCTION</scope>
    <scope>INTERACTION WITH HOST PLSCR1</scope>
</reference>
<reference key="27">
    <citation type="journal article" date="2023" name="J. Virol.">
        <title>Human Cytomegalovirus IE1 Impairs Neuronal Migration by Downregulating Connexin 43.</title>
        <authorList>
            <person name="Huang S.N."/>
            <person name="Pan Y.T."/>
            <person name="Zhou Y.P."/>
            <person name="Wang X.Z."/>
            <person name="Mei M.J."/>
            <person name="Yang B."/>
            <person name="Li D."/>
            <person name="Zeng W.B."/>
            <person name="Cheng S."/>
            <person name="Sun J.Y."/>
            <person name="Cheng H."/>
            <person name="Zhao F."/>
            <person name="Luo M.H."/>
        </authorList>
    </citation>
    <scope>FUNCTION</scope>
</reference>
<reference evidence="32" key="28">
    <citation type="journal article" date="2016" name="Elife">
        <title>Human cytomegalovirus IE1 protein alters the higher-order chromatin structure by targeting the acidic patch of the nucleosome.</title>
        <authorList>
            <person name="Fang Q."/>
            <person name="Chen P."/>
            <person name="Wang M."/>
            <person name="Fang J."/>
            <person name="Yang N."/>
            <person name="Li G."/>
            <person name="Xu R.M."/>
        </authorList>
    </citation>
    <scope>X-RAY CRYSTALLOGRAPHY (2.81 ANGSTROMS) OF 476-491</scope>
</reference>
<feature type="chain" id="PRO_0000115356" description="Immediate early protein IE1">
    <location>
        <begin position="1"/>
        <end position="491"/>
    </location>
</feature>
<feature type="region of interest" description="Disordered" evidence="2">
    <location>
        <begin position="1"/>
        <end position="30"/>
    </location>
</feature>
<feature type="region of interest" description="Nuclear localization signal" evidence="11">
    <location>
        <begin position="1"/>
        <end position="24"/>
    </location>
</feature>
<feature type="region of interest" description="Interaction with host PML, interference with PML sumoylation and disruption of PML-associated nuclear bodies" evidence="5">
    <location>
        <begin position="132"/>
        <end position="346"/>
    </location>
</feature>
<feature type="region of interest" description="Interaction with host STAT2" evidence="13">
    <location>
        <begin position="373"/>
        <end position="445"/>
    </location>
</feature>
<feature type="region of interest" description="Interaction with host STAT3" evidence="21">
    <location>
        <begin position="410"/>
        <end position="445"/>
    </location>
</feature>
<feature type="region of interest" description="Modulation of STAT3/STAT1 signaling" evidence="21">
    <location>
        <begin position="410"/>
        <end position="420"/>
    </location>
</feature>
<feature type="region of interest" description="Disordered" evidence="2">
    <location>
        <begin position="421"/>
        <end position="491"/>
    </location>
</feature>
<feature type="region of interest" description="Acidic" evidence="11 13">
    <location>
        <begin position="421"/>
        <end position="472"/>
    </location>
</feature>
<feature type="region of interest" description="Interaction with host SUMO1">
    <location>
        <begin position="449"/>
        <end position="452"/>
    </location>
</feature>
<feature type="region of interest" description="Chromosome-tethering domain (CTD), binding to histones" evidence="16 18">
    <location>
        <begin position="475"/>
        <end position="491"/>
    </location>
</feature>
<feature type="compositionally biased region" description="Basic and acidic residues" evidence="2">
    <location>
        <begin position="1"/>
        <end position="11"/>
    </location>
</feature>
<feature type="compositionally biased region" description="Acidic residues" evidence="2">
    <location>
        <begin position="423"/>
        <end position="444"/>
    </location>
</feature>
<feature type="compositionally biased region" description="Acidic residues" evidence="2">
    <location>
        <begin position="455"/>
        <end position="470"/>
    </location>
</feature>
<feature type="cross-link" description="Glycyl lysine isopeptide (Lys-Gly) (interchain with G-Cter in SUMO)" evidence="4 11">
    <location>
        <position position="450"/>
    </location>
</feature>
<feature type="mutagenesis site" description="Complete loss of interference with PML sumoylation, disruption of PML-associated nuclear bodies and transactivation activity." evidence="5">
    <original>L</original>
    <variation>P</variation>
    <location>
        <position position="174"/>
    </location>
</feature>
<feature type="mutagenesis site" description="Complete loss of SUMO-1 modification, no effect on nuclear localization and function of IE72, reduced levels of IE2 transcription." evidence="4 6">
    <original>K</original>
    <variation>R</variation>
    <location>
        <position position="450"/>
    </location>
</feature>
<feature type="sequence conflict" description="In Ref. 1; AAA45979." evidence="30" ref="1">
    <original>V</original>
    <variation>L</variation>
    <location>
        <position position="96"/>
    </location>
</feature>
<feature type="turn" evidence="33">
    <location>
        <begin position="486"/>
        <end position="489"/>
    </location>
</feature>
<proteinExistence type="evidence at protein level"/>
<comment type="function">
    <text evidence="1 3 5 7 8 9 10 11 13 15 17 19 20 21 22 23 24 26 27 28">Plays an important role in transactivating viral early genes as well as activating its own promoter, probably by altering the viral chromatin structure (PubMed:15572445, PubMed:17331553, PubMed:23878222, PubMed:26812545, PubMed:35138119, PubMed:8876134). Expression of IE1 and IE2 proteins is critical for the establishment of lytic infection and reactivation from viral latency (By similarity). Disrupts PML-associated ND10 nuclear bodies by interfering with host PML and SP100 sumoylation thereby altering the regulation of type I and type II interferon-induced gene expression (PubMed:10233977, PubMed:15163746, PubMed:17367754, PubMed:9151854). Promotes efficient viral growth by interacting with and directing host SP100 to degradation, leading to enhanced acetylation level of histones (PubMed:21880768). In addition, functions in counteracting the host innate antiviral response. Inhibits the type I interferon pathway by directly interacting with and sequestrating host STAT2 (PubMed:16497831, PubMed:18701593, PubMed:19812155). Also targets type II interferon pathway by repressing IL6- and STAT3 target genes (PubMed:27387064). Repression of STAT3 genes is due to STAT3 nuclear accumulation and disruption of IL6-induced STAT3 phosphorylation by IE1 (By similarity). This repression is followed by phosphorylation and activation of STAT1 (PubMed:27387064). Inhibits host ISG transcription by sequestering host ISGF3 in a PML- and STAT2- binding dependent manner (PubMed:25812002). Alters host cell cycle progression, probably through its interaction with host E2F1 or RB1 that overcomes the RB1-mediated repression of E2F-responsive promoters (PubMed:8892909). May act as a E3 ubiquitin ligase targeting several host proteins including HES1 and SP100A for ubiquitination and subsequent proteasomal degradation (PubMed:28750047). Impairs the radial migration of immature neurons by downregulating Gap junction alpha-1 protein/GJA1 also via ubiquitination and degradation (PubMed:37097169).</text>
</comment>
<comment type="subunit">
    <text evidence="1 7 8 11 12 13 14 15 19 21 23 25 27 31">Forms homodimers (By similarity). Interacts with human p53/TP53; this interaction inhibits p53/TP53-dependent transactivation activity (PubMed:19776115). Interacts with host STAT1 (PubMed:16497831, PubMed:25812002). Interacts with host STAT2; this interaction promotes viral growth and counteracts the antiviral interferon response (PubMed:16497831, PubMed:18701593, PubMed:19812155, PubMed:25812002). May also interact with the host STAT1-STAT2 heterodimer (PubMed:16497831). Interacts with host STAT3; this interaction leads to STAT3 nuclear accumulation and disruption of IL6-induced STAT3 phosphorylation (PubMed:27387064). Interacts with host PML; this interaction inhibits host PML de novo sumoylation and probably inhibits PML regulation of type I and type II interferon-induced gene expression (Probable) (PubMed:25812002). Interacts with host DAXX (PubMed:20444888). Interacts with host SP100 (PubMed:21880768). Interacts with host E2F1 (PubMed:7494286). Interacts with host RB1 (PubMed:8892909). Interacts with host HDAC1; this interaction inhibits histone deacetylation and promotes viral transcription (PubMed:25812002). Interacts with host HDAC2; this interaction inhibits histone deacetylation and promotes viral transcription (PubMed:25812002). Interacts with host HDAC3; this interaction inhibits histone deacetylation and promotes viral transcription (PubMed:15572445). Interacts with host PLSCR1; this interaction inhibits IE1 transactivating activity (PubMed:35138119).</text>
</comment>
<comment type="interaction">
    <interactant intactId="EBI-6691147">
        <id>P03169</id>
    </interactant>
    <interactant intactId="EBI-751145">
        <id>P23497</id>
        <label>SP100</label>
    </interactant>
    <organismsDiffer>true</organismsDiffer>
    <experiments>4</experiments>
</comment>
<comment type="subcellular location">
    <subcellularLocation>
        <location evidence="6 8 22 28">Host nucleus</location>
    </subcellularLocation>
    <text evidence="6 28">Colocalizes with host PML-associated nuclear bodies very early post infection.</text>
</comment>
<comment type="domain">
    <text evidence="10 16 18">The N-terminal region is required for nuclear targeting (PubMed:17367754). The C-terminal 16-amino acid is termed the chromosome-tethering domain (CTD) and is required for the association of IE1, host PML and host STAT2 with the mitotic chromosomes (PubMed:22158879). Targets host nucleosomes by directly binding to the acidic pocket of core histones (PubMed:24227840).</text>
</comment>
<comment type="PTM">
    <text evidence="1 11">Sumoylated by host PML/nuclear domain 10 (By similarity). Sumoylation abolishes the interaction with host STAT2 and thus the IE1-mediated repression of interferon-stimulated genes (PubMed:18701593).</text>
</comment>
<comment type="similarity">
    <text evidence="30">Belongs to the HHV-5 IE1 protein family.</text>
</comment>
<organism>
    <name type="scientific">Human cytomegalovirus (strain Towne)</name>
    <name type="common">HHV-5</name>
    <name type="synonym">Human herpesvirus 5</name>
    <dbReference type="NCBI Taxonomy" id="10363"/>
    <lineage>
        <taxon>Viruses</taxon>
        <taxon>Duplodnaviria</taxon>
        <taxon>Heunggongvirae</taxon>
        <taxon>Peploviricota</taxon>
        <taxon>Herviviricetes</taxon>
        <taxon>Herpesvirales</taxon>
        <taxon>Orthoherpesviridae</taxon>
        <taxon>Betaherpesvirinae</taxon>
        <taxon>Cytomegalovirus</taxon>
        <taxon>Cytomegalovirus humanbeta5</taxon>
        <taxon>Human cytomegalovirus</taxon>
    </lineage>
</organism>
<name>VIE1_HCMVT</name>
<accession>P03169</accession>
<accession>Q00677</accession>
<organismHost>
    <name type="scientific">Homo sapiens</name>
    <name type="common">Human</name>
    <dbReference type="NCBI Taxonomy" id="9606"/>
</organismHost>
<protein>
    <recommendedName>
        <fullName>Immediate early protein IE1</fullName>
        <shortName>IE1</shortName>
    </recommendedName>
    <alternativeName>
        <fullName>55 kDa immediate-early protein 1</fullName>
    </alternativeName>
    <alternativeName>
        <fullName evidence="1">IE1p72</fullName>
    </alternativeName>
    <alternativeName>
        <fullName evidence="29">IE72</fullName>
    </alternativeName>
</protein>
<keyword id="KW-0002">3D-structure</keyword>
<keyword id="KW-0010">Activator</keyword>
<keyword id="KW-0244">Early protein</keyword>
<keyword id="KW-1078">G1/S host cell cycle checkpoint dysregulation by virus</keyword>
<keyword id="KW-1048">Host nucleus</keyword>
<keyword id="KW-0945">Host-virus interaction</keyword>
<keyword id="KW-1090">Inhibition of host innate immune response by virus</keyword>
<keyword id="KW-1114">Inhibition of host interferon signaling pathway by virus</keyword>
<keyword id="KW-0922">Interferon antiviral system evasion</keyword>
<keyword id="KW-1017">Isopeptide bond</keyword>
<keyword id="KW-1121">Modulation of host cell cycle by virus</keyword>
<keyword id="KW-0832">Ubl conjugation</keyword>
<keyword id="KW-0899">Viral immunoevasion</keyword>
<sequence length="491" mass="55179">MESSAKRKMDPDNPDEGPSSKVPRPETPVTKATTFLQTMLRKEVNSQLSLGDPLFPELAEESLKTFERVTEDCNENPEKDVLAELVKQIKVRVDMVRHRIKEHMLKKYTQTEEKFTGAFNMMGGCLQNALDILDKVHEPFEEMKCIGLTMQSMYENYIVPEDKREMWMACIKELHDVSKGAANKLGGALQAKARAKKDELRRKMMYMCYRNIEFFTKNSAFPKTTNGCSQAMAALQNLPQCSPDEIMAYAQKIFKILDEERDKVLTHIDHIFMDILTTCVETMCNEYKVTSDACMMTMYGGISLLSEFCRVLSCYVLEETSVMLAKRPLITKPEVISVMKRRIEEICMKVFAQYILGADPLRVCSPSVDDLRAIAEESDEEEAIVAYTLATRGASSSDSLVSPPESPVPATIPLSSVIVAENSDQEESEQSDEEEEEGAQEEREDTVSVKSEPVSEIEEVAPEEEEDGAEEPTASGGKSTHPMVTRSKADQ</sequence>
<dbReference type="EMBL" id="AH002368">
    <property type="protein sequence ID" value="AAA45979.1"/>
    <property type="molecule type" value="Genomic_DNA"/>
</dbReference>
<dbReference type="EMBL" id="M60321">
    <property type="protein sequence ID" value="AAA45982.1"/>
    <property type="molecule type" value="Genomic_DNA"/>
</dbReference>
<dbReference type="PIR" id="A03722">
    <property type="entry name" value="EDBEIC"/>
</dbReference>
<dbReference type="PDB" id="4QRU">
    <property type="method" value="X-ray"/>
    <property type="resolution" value="1.60 A"/>
    <property type="chains" value="C=199-207"/>
</dbReference>
<dbReference type="PDB" id="5E5A">
    <property type="method" value="X-ray"/>
    <property type="resolution" value="2.81 A"/>
    <property type="chains" value="K=476-491"/>
</dbReference>
<dbReference type="PDBsum" id="4QRU"/>
<dbReference type="PDBsum" id="5E5A"/>
<dbReference type="SMR" id="P03169"/>
<dbReference type="IntAct" id="P03169">
    <property type="interactions" value="1"/>
</dbReference>
<dbReference type="EvolutionaryTrace" id="P03169"/>
<dbReference type="GO" id="GO:0042025">
    <property type="term" value="C:host cell nucleus"/>
    <property type="evidence" value="ECO:0007669"/>
    <property type="project" value="UniProtKB-SubCell"/>
</dbReference>
<dbReference type="GO" id="GO:0039695">
    <property type="term" value="P:DNA-templated viral transcription"/>
    <property type="evidence" value="ECO:0000314"/>
    <property type="project" value="UniProtKB"/>
</dbReference>
<dbReference type="GO" id="GO:0039645">
    <property type="term" value="P:symbiont-mediated perturbation of host cell cycle G1/S transition checkpoint"/>
    <property type="evidence" value="ECO:0007669"/>
    <property type="project" value="UniProtKB-KW"/>
</dbReference>
<dbReference type="GO" id="GO:0052170">
    <property type="term" value="P:symbiont-mediated suppression of host innate immune response"/>
    <property type="evidence" value="ECO:0007669"/>
    <property type="project" value="UniProtKB-KW"/>
</dbReference>
<dbReference type="GO" id="GO:0039502">
    <property type="term" value="P:symbiont-mediated suppression of host type I interferon-mediated signaling pathway"/>
    <property type="evidence" value="ECO:0007669"/>
    <property type="project" value="UniProtKB-KW"/>
</dbReference>
<dbReference type="InterPro" id="IPR010855">
    <property type="entry name" value="Cytomega_IE1/IE2"/>
</dbReference>
<dbReference type="Pfam" id="PF07340">
    <property type="entry name" value="Herpes_IE1"/>
    <property type="match status" value="1"/>
</dbReference>